<comment type="function">
    <text evidence="1">Involved in the transport of maltose and maltodextrins.</text>
</comment>
<comment type="catalytic activity">
    <reaction evidence="1">
        <text>beta-maltose(in) = beta-maltose(out)</text>
        <dbReference type="Rhea" id="RHEA:29731"/>
        <dbReference type="ChEBI" id="CHEBI:18147"/>
    </reaction>
</comment>
<comment type="subunit">
    <text evidence="1">Homotrimer formed of three 18-stranded antiparallel beta-barrels, containing three independent channels.</text>
</comment>
<comment type="subcellular location">
    <subcellularLocation>
        <location evidence="1">Cell outer membrane</location>
        <topology evidence="1">Multi-pass membrane protein</topology>
    </subcellularLocation>
</comment>
<comment type="induction">
    <text evidence="1">By maltose.</text>
</comment>
<comment type="similarity">
    <text evidence="1">Belongs to the porin LamB (TC 1.B.3) family.</text>
</comment>
<gene>
    <name evidence="1" type="primary">lamB2</name>
    <name type="ordered locus">YpsIP31758_0920</name>
</gene>
<reference key="1">
    <citation type="journal article" date="2007" name="PLoS Genet.">
        <title>The complete genome sequence of Yersinia pseudotuberculosis IP31758, the causative agent of Far East scarlet-like fever.</title>
        <authorList>
            <person name="Eppinger M."/>
            <person name="Rosovitz M.J."/>
            <person name="Fricke W.F."/>
            <person name="Rasko D.A."/>
            <person name="Kokorina G."/>
            <person name="Fayolle C."/>
            <person name="Lindler L.E."/>
            <person name="Carniel E."/>
            <person name="Ravel J."/>
        </authorList>
    </citation>
    <scope>NUCLEOTIDE SEQUENCE [LARGE SCALE GENOMIC DNA]</scope>
    <source>
        <strain>IP 31758</strain>
    </source>
</reference>
<dbReference type="EMBL" id="CP000720">
    <property type="protein sequence ID" value="ABS49301.1"/>
    <property type="molecule type" value="Genomic_DNA"/>
</dbReference>
<dbReference type="RefSeq" id="WP_011192907.1">
    <property type="nucleotide sequence ID" value="NC_009708.1"/>
</dbReference>
<dbReference type="SMR" id="A7FF76"/>
<dbReference type="KEGG" id="ypi:YpsIP31758_0920"/>
<dbReference type="HOGENOM" id="CLU_032473_4_1_6"/>
<dbReference type="Proteomes" id="UP000002412">
    <property type="component" value="Chromosome"/>
</dbReference>
<dbReference type="GO" id="GO:0009279">
    <property type="term" value="C:cell outer membrane"/>
    <property type="evidence" value="ECO:0007669"/>
    <property type="project" value="UniProtKB-SubCell"/>
</dbReference>
<dbReference type="GO" id="GO:0046930">
    <property type="term" value="C:pore complex"/>
    <property type="evidence" value="ECO:0007669"/>
    <property type="project" value="UniProtKB-KW"/>
</dbReference>
<dbReference type="GO" id="GO:0042958">
    <property type="term" value="F:maltodextrin transmembrane transporter activity"/>
    <property type="evidence" value="ECO:0007669"/>
    <property type="project" value="InterPro"/>
</dbReference>
<dbReference type="GO" id="GO:0015481">
    <property type="term" value="F:maltose transporting porin activity"/>
    <property type="evidence" value="ECO:0007669"/>
    <property type="project" value="InterPro"/>
</dbReference>
<dbReference type="GO" id="GO:0006811">
    <property type="term" value="P:monoatomic ion transport"/>
    <property type="evidence" value="ECO:0007669"/>
    <property type="project" value="UniProtKB-KW"/>
</dbReference>
<dbReference type="CDD" id="cd01346">
    <property type="entry name" value="Maltoporin-like"/>
    <property type="match status" value="1"/>
</dbReference>
<dbReference type="Gene3D" id="2.40.170.10">
    <property type="entry name" value="Porin, LamB type"/>
    <property type="match status" value="1"/>
</dbReference>
<dbReference type="HAMAP" id="MF_01301">
    <property type="entry name" value="LamB"/>
    <property type="match status" value="1"/>
</dbReference>
<dbReference type="InterPro" id="IPR050286">
    <property type="entry name" value="G_neg_Bact_CarbUptk_Porin"/>
</dbReference>
<dbReference type="InterPro" id="IPR023738">
    <property type="entry name" value="Maltoporin"/>
</dbReference>
<dbReference type="InterPro" id="IPR003192">
    <property type="entry name" value="Porin_LamB"/>
</dbReference>
<dbReference type="InterPro" id="IPR036998">
    <property type="entry name" value="Porin_LamB_sf"/>
</dbReference>
<dbReference type="NCBIfam" id="NF006860">
    <property type="entry name" value="PRK09360.1"/>
    <property type="match status" value="1"/>
</dbReference>
<dbReference type="NCBIfam" id="NF009061">
    <property type="entry name" value="PRK12395.1"/>
    <property type="match status" value="1"/>
</dbReference>
<dbReference type="PANTHER" id="PTHR38762">
    <property type="entry name" value="CRYPTIC OUTER MEMBRANE PORIN BGLH-RELATED"/>
    <property type="match status" value="1"/>
</dbReference>
<dbReference type="PANTHER" id="PTHR38762:SF1">
    <property type="entry name" value="CRYPTIC OUTER MEMBRANE PORIN BGLH-RELATED"/>
    <property type="match status" value="1"/>
</dbReference>
<dbReference type="Pfam" id="PF02264">
    <property type="entry name" value="LamB"/>
    <property type="match status" value="1"/>
</dbReference>
<dbReference type="SUPFAM" id="SSF56935">
    <property type="entry name" value="Porins"/>
    <property type="match status" value="1"/>
</dbReference>
<evidence type="ECO:0000255" key="1">
    <source>
        <dbReference type="HAMAP-Rule" id="MF_01301"/>
    </source>
</evidence>
<keyword id="KW-0998">Cell outer membrane</keyword>
<keyword id="KW-0406">Ion transport</keyword>
<keyword id="KW-0472">Membrane</keyword>
<keyword id="KW-0626">Porin</keyword>
<keyword id="KW-0732">Signal</keyword>
<keyword id="KW-0762">Sugar transport</keyword>
<keyword id="KW-0812">Transmembrane</keyword>
<keyword id="KW-1134">Transmembrane beta strand</keyword>
<keyword id="KW-0813">Transport</keyword>
<feature type="signal peptide" evidence="1">
    <location>
        <begin position="1"/>
        <end position="23"/>
    </location>
</feature>
<feature type="chain" id="PRO_0000322018" description="Maltoporin 2">
    <location>
        <begin position="24"/>
        <end position="419"/>
    </location>
</feature>
<feature type="site" description="Greasy slide, important in sugar transport" evidence="1">
    <location>
        <position position="32"/>
    </location>
</feature>
<feature type="site" description="Greasy slide, important in sugar transport" evidence="1">
    <location>
        <position position="63"/>
    </location>
</feature>
<feature type="site" description="Greasy slide, important in sugar transport" evidence="1">
    <location>
        <position position="250"/>
    </location>
</feature>
<feature type="site" description="Greasy slide, important in sugar transport" evidence="1">
    <location>
        <position position="418"/>
    </location>
</feature>
<name>LAMB2_YERP3</name>
<sequence>MKTSLRTLSVALAAALVSPSVLAIEKIDFHGYMRAGVGVSSDGGLAEWQKTMVGRLGNESDTYGEIGLGAEVYKKEDVSFYLESMVSMLSDGSNDSETTIGDDAQFGLRQLNLQIKGLIPGDKEAVIWGGKRYYQRHDLHIIDTKYWNISGSGAGIENYTVGPGAVSVAWVRGDANDVDTRITGDSDVNINYIDVRYAGFKPWAGSWTEVGIDYAMPNPTKQQKEYGGLYDADNAVMLTGEISQDMFGGYNKLVLQYANKGLAQNMISQGGGWYDMWHKTDEAKGYRVINTGLIPITDKFSFNHVLTWGSANDITEYTDKTNLISLVGRAQYQFTQYVRAIGEVGGFYQKDTYHNGSNYKQGGEKYTIALGLAEGPDFLSRPELRVFASYLNDSENGKPFEDGTSNDTWNFGVQVEAWW</sequence>
<organism>
    <name type="scientific">Yersinia pseudotuberculosis serotype O:1b (strain IP 31758)</name>
    <dbReference type="NCBI Taxonomy" id="349747"/>
    <lineage>
        <taxon>Bacteria</taxon>
        <taxon>Pseudomonadati</taxon>
        <taxon>Pseudomonadota</taxon>
        <taxon>Gammaproteobacteria</taxon>
        <taxon>Enterobacterales</taxon>
        <taxon>Yersiniaceae</taxon>
        <taxon>Yersinia</taxon>
    </lineage>
</organism>
<protein>
    <recommendedName>
        <fullName evidence="1">Maltoporin 2</fullName>
    </recommendedName>
    <alternativeName>
        <fullName evidence="1">Maltose-inducible porin 2</fullName>
    </alternativeName>
</protein>
<accession>A7FF76</accession>
<proteinExistence type="inferred from homology"/>